<feature type="chain" id="PRO_0000386350" description="GTPase Obg">
    <location>
        <begin position="1"/>
        <end position="337"/>
    </location>
</feature>
<feature type="domain" description="Obg" evidence="2">
    <location>
        <begin position="1"/>
        <end position="159"/>
    </location>
</feature>
<feature type="domain" description="OBG-type G" evidence="1">
    <location>
        <begin position="160"/>
        <end position="331"/>
    </location>
</feature>
<feature type="binding site" evidence="1">
    <location>
        <begin position="166"/>
        <end position="173"/>
    </location>
    <ligand>
        <name>GTP</name>
        <dbReference type="ChEBI" id="CHEBI:37565"/>
    </ligand>
</feature>
<feature type="binding site" evidence="1">
    <location>
        <position position="173"/>
    </location>
    <ligand>
        <name>Mg(2+)</name>
        <dbReference type="ChEBI" id="CHEBI:18420"/>
    </ligand>
</feature>
<feature type="binding site" evidence="1">
    <location>
        <begin position="191"/>
        <end position="195"/>
    </location>
    <ligand>
        <name>GTP</name>
        <dbReference type="ChEBI" id="CHEBI:37565"/>
    </ligand>
</feature>
<feature type="binding site" evidence="1">
    <location>
        <position position="193"/>
    </location>
    <ligand>
        <name>Mg(2+)</name>
        <dbReference type="ChEBI" id="CHEBI:18420"/>
    </ligand>
</feature>
<feature type="binding site" evidence="1">
    <location>
        <begin position="213"/>
        <end position="216"/>
    </location>
    <ligand>
        <name>GTP</name>
        <dbReference type="ChEBI" id="CHEBI:37565"/>
    </ligand>
</feature>
<feature type="binding site" evidence="1">
    <location>
        <begin position="283"/>
        <end position="286"/>
    </location>
    <ligand>
        <name>GTP</name>
        <dbReference type="ChEBI" id="CHEBI:37565"/>
    </ligand>
</feature>
<feature type="binding site" evidence="1">
    <location>
        <begin position="312"/>
        <end position="314"/>
    </location>
    <ligand>
        <name>GTP</name>
        <dbReference type="ChEBI" id="CHEBI:37565"/>
    </ligand>
</feature>
<sequence length="337" mass="36943">MQFIDYVKIYVKAGDGGRGCISFRREKYVPKGGPDGGDGGKGGDVIIQASSELHTLLDHRYQKVYKAQRGQHGKGSNMKGKDGENLIIKVPVGTVVKDAETEEVLADLDEEEKYFIVAKGGRGGFGNAHFATPTNQAPRYAQPGEKGQERWVILELKLLADVGLIGLPNAGKSTLISVISSAKPKIADYPFTTLIPVLGVVKYENYQSFVVADIPGLIEGAHKGAGLGHQFLRHVERTSLLLHLVDVSDFSESDPREDFEKIQKELELYNPALTKKPFAVVGTKIDIAYKGDRLGKLKKYCEEKGIDFFPISAVKKEGIDKLLHYLSEKVGKKCGLL</sequence>
<dbReference type="EC" id="3.6.5.-" evidence="1"/>
<dbReference type="EMBL" id="CP001147">
    <property type="protein sequence ID" value="ACI20895.1"/>
    <property type="molecule type" value="Genomic_DNA"/>
</dbReference>
<dbReference type="RefSeq" id="YP_002248280.1">
    <property type="nucleotide sequence ID" value="NC_011296.1"/>
</dbReference>
<dbReference type="SMR" id="B5YJ65"/>
<dbReference type="FunCoup" id="B5YJ65">
    <property type="interactions" value="425"/>
</dbReference>
<dbReference type="STRING" id="289376.THEYE_A0433"/>
<dbReference type="EnsemblBacteria" id="ACI20895">
    <property type="protein sequence ID" value="ACI20895"/>
    <property type="gene ID" value="THEYE_A0433"/>
</dbReference>
<dbReference type="KEGG" id="tye:THEYE_A0433"/>
<dbReference type="PATRIC" id="fig|289376.4.peg.430"/>
<dbReference type="eggNOG" id="COG0536">
    <property type="taxonomic scope" value="Bacteria"/>
</dbReference>
<dbReference type="HOGENOM" id="CLU_011747_2_3_0"/>
<dbReference type="InParanoid" id="B5YJ65"/>
<dbReference type="OrthoDB" id="9807318at2"/>
<dbReference type="Proteomes" id="UP000000718">
    <property type="component" value="Chromosome"/>
</dbReference>
<dbReference type="GO" id="GO:0005737">
    <property type="term" value="C:cytoplasm"/>
    <property type="evidence" value="ECO:0007669"/>
    <property type="project" value="UniProtKB-SubCell"/>
</dbReference>
<dbReference type="GO" id="GO:0005525">
    <property type="term" value="F:GTP binding"/>
    <property type="evidence" value="ECO:0000318"/>
    <property type="project" value="GO_Central"/>
</dbReference>
<dbReference type="GO" id="GO:0003924">
    <property type="term" value="F:GTPase activity"/>
    <property type="evidence" value="ECO:0000318"/>
    <property type="project" value="GO_Central"/>
</dbReference>
<dbReference type="GO" id="GO:0000287">
    <property type="term" value="F:magnesium ion binding"/>
    <property type="evidence" value="ECO:0007669"/>
    <property type="project" value="InterPro"/>
</dbReference>
<dbReference type="GO" id="GO:0042254">
    <property type="term" value="P:ribosome biogenesis"/>
    <property type="evidence" value="ECO:0007669"/>
    <property type="project" value="UniProtKB-UniRule"/>
</dbReference>
<dbReference type="CDD" id="cd01898">
    <property type="entry name" value="Obg"/>
    <property type="match status" value="1"/>
</dbReference>
<dbReference type="FunFam" id="2.70.210.12:FF:000001">
    <property type="entry name" value="GTPase Obg"/>
    <property type="match status" value="1"/>
</dbReference>
<dbReference type="Gene3D" id="2.70.210.12">
    <property type="entry name" value="GTP1/OBG domain"/>
    <property type="match status" value="1"/>
</dbReference>
<dbReference type="Gene3D" id="3.40.50.300">
    <property type="entry name" value="P-loop containing nucleotide triphosphate hydrolases"/>
    <property type="match status" value="1"/>
</dbReference>
<dbReference type="HAMAP" id="MF_01454">
    <property type="entry name" value="GTPase_Obg"/>
    <property type="match status" value="1"/>
</dbReference>
<dbReference type="InterPro" id="IPR031167">
    <property type="entry name" value="G_OBG"/>
</dbReference>
<dbReference type="InterPro" id="IPR006073">
    <property type="entry name" value="GTP-bd"/>
</dbReference>
<dbReference type="InterPro" id="IPR014100">
    <property type="entry name" value="GTP-bd_Obg/CgtA"/>
</dbReference>
<dbReference type="InterPro" id="IPR006074">
    <property type="entry name" value="GTP1-OBG_CS"/>
</dbReference>
<dbReference type="InterPro" id="IPR006169">
    <property type="entry name" value="GTP1_OBG_dom"/>
</dbReference>
<dbReference type="InterPro" id="IPR036726">
    <property type="entry name" value="GTP1_OBG_dom_sf"/>
</dbReference>
<dbReference type="InterPro" id="IPR045086">
    <property type="entry name" value="OBG_GTPase"/>
</dbReference>
<dbReference type="InterPro" id="IPR027417">
    <property type="entry name" value="P-loop_NTPase"/>
</dbReference>
<dbReference type="InterPro" id="IPR005225">
    <property type="entry name" value="Small_GTP-bd"/>
</dbReference>
<dbReference type="NCBIfam" id="TIGR02729">
    <property type="entry name" value="Obg_CgtA"/>
    <property type="match status" value="1"/>
</dbReference>
<dbReference type="NCBIfam" id="NF008954">
    <property type="entry name" value="PRK12296.1"/>
    <property type="match status" value="1"/>
</dbReference>
<dbReference type="NCBIfam" id="NF008955">
    <property type="entry name" value="PRK12297.1"/>
    <property type="match status" value="1"/>
</dbReference>
<dbReference type="NCBIfam" id="NF008956">
    <property type="entry name" value="PRK12299.1"/>
    <property type="match status" value="1"/>
</dbReference>
<dbReference type="NCBIfam" id="TIGR00231">
    <property type="entry name" value="small_GTP"/>
    <property type="match status" value="1"/>
</dbReference>
<dbReference type="PANTHER" id="PTHR11702">
    <property type="entry name" value="DEVELOPMENTALLY REGULATED GTP-BINDING PROTEIN-RELATED"/>
    <property type="match status" value="1"/>
</dbReference>
<dbReference type="PANTHER" id="PTHR11702:SF31">
    <property type="entry name" value="MITOCHONDRIAL RIBOSOME-ASSOCIATED GTPASE 2"/>
    <property type="match status" value="1"/>
</dbReference>
<dbReference type="Pfam" id="PF01018">
    <property type="entry name" value="GTP1_OBG"/>
    <property type="match status" value="1"/>
</dbReference>
<dbReference type="Pfam" id="PF01926">
    <property type="entry name" value="MMR_HSR1"/>
    <property type="match status" value="1"/>
</dbReference>
<dbReference type="PIRSF" id="PIRSF002401">
    <property type="entry name" value="GTP_bd_Obg/CgtA"/>
    <property type="match status" value="1"/>
</dbReference>
<dbReference type="PRINTS" id="PR00326">
    <property type="entry name" value="GTP1OBG"/>
</dbReference>
<dbReference type="SUPFAM" id="SSF82051">
    <property type="entry name" value="Obg GTP-binding protein N-terminal domain"/>
    <property type="match status" value="1"/>
</dbReference>
<dbReference type="SUPFAM" id="SSF52540">
    <property type="entry name" value="P-loop containing nucleoside triphosphate hydrolases"/>
    <property type="match status" value="1"/>
</dbReference>
<dbReference type="PROSITE" id="PS51710">
    <property type="entry name" value="G_OBG"/>
    <property type="match status" value="1"/>
</dbReference>
<dbReference type="PROSITE" id="PS00905">
    <property type="entry name" value="GTP1_OBG"/>
    <property type="match status" value="1"/>
</dbReference>
<dbReference type="PROSITE" id="PS51883">
    <property type="entry name" value="OBG"/>
    <property type="match status" value="1"/>
</dbReference>
<protein>
    <recommendedName>
        <fullName evidence="1">GTPase Obg</fullName>
        <ecNumber evidence="1">3.6.5.-</ecNumber>
    </recommendedName>
    <alternativeName>
        <fullName evidence="1">GTP-binding protein Obg</fullName>
    </alternativeName>
</protein>
<reference key="1">
    <citation type="submission" date="2008-08" db="EMBL/GenBank/DDBJ databases">
        <title>The complete genome sequence of Thermodesulfovibrio yellowstonii strain ATCC 51303 / DSM 11347 / YP87.</title>
        <authorList>
            <person name="Dodson R.J."/>
            <person name="Durkin A.S."/>
            <person name="Wu M."/>
            <person name="Eisen J."/>
            <person name="Sutton G."/>
        </authorList>
    </citation>
    <scope>NUCLEOTIDE SEQUENCE [LARGE SCALE GENOMIC DNA]</scope>
    <source>
        <strain>ATCC 51303 / DSM 11347 / YP87</strain>
    </source>
</reference>
<accession>B5YJ65</accession>
<organism>
    <name type="scientific">Thermodesulfovibrio yellowstonii (strain ATCC 51303 / DSM 11347 / YP87)</name>
    <dbReference type="NCBI Taxonomy" id="289376"/>
    <lineage>
        <taxon>Bacteria</taxon>
        <taxon>Pseudomonadati</taxon>
        <taxon>Nitrospirota</taxon>
        <taxon>Thermodesulfovibrionia</taxon>
        <taxon>Thermodesulfovibrionales</taxon>
        <taxon>Thermodesulfovibrionaceae</taxon>
        <taxon>Thermodesulfovibrio</taxon>
    </lineage>
</organism>
<evidence type="ECO:0000255" key="1">
    <source>
        <dbReference type="HAMAP-Rule" id="MF_01454"/>
    </source>
</evidence>
<evidence type="ECO:0000255" key="2">
    <source>
        <dbReference type="PROSITE-ProRule" id="PRU01231"/>
    </source>
</evidence>
<keyword id="KW-0963">Cytoplasm</keyword>
<keyword id="KW-0342">GTP-binding</keyword>
<keyword id="KW-0378">Hydrolase</keyword>
<keyword id="KW-0460">Magnesium</keyword>
<keyword id="KW-0479">Metal-binding</keyword>
<keyword id="KW-0547">Nucleotide-binding</keyword>
<keyword id="KW-1185">Reference proteome</keyword>
<name>OBG_THEYD</name>
<comment type="function">
    <text evidence="1">An essential GTPase which binds GTP, GDP and possibly (p)ppGpp with moderate affinity, with high nucleotide exchange rates and a fairly low GTP hydrolysis rate. Plays a role in control of the cell cycle, stress response, ribosome biogenesis and in those bacteria that undergo differentiation, in morphogenesis control.</text>
</comment>
<comment type="cofactor">
    <cofactor evidence="1">
        <name>Mg(2+)</name>
        <dbReference type="ChEBI" id="CHEBI:18420"/>
    </cofactor>
</comment>
<comment type="subunit">
    <text evidence="1">Monomer.</text>
</comment>
<comment type="subcellular location">
    <subcellularLocation>
        <location evidence="1">Cytoplasm</location>
    </subcellularLocation>
</comment>
<comment type="similarity">
    <text evidence="1">Belongs to the TRAFAC class OBG-HflX-like GTPase superfamily. OBG GTPase family.</text>
</comment>
<proteinExistence type="inferred from homology"/>
<gene>
    <name evidence="1" type="primary">obg</name>
    <name type="ordered locus">THEYE_A0433</name>
</gene>